<protein>
    <recommendedName>
        <fullName evidence="1">3-phosphoshikimate 1-carboxyvinyltransferase</fullName>
        <ecNumber evidence="1">2.5.1.19</ecNumber>
    </recommendedName>
    <alternativeName>
        <fullName evidence="1">5-enolpyruvylshikimate-3-phosphate synthase</fullName>
        <shortName evidence="1">EPSP synthase</shortName>
        <shortName evidence="1">EPSPS</shortName>
    </alternativeName>
</protein>
<sequence>MNHHLPSRPARSRQSQGLKGNLRVPGDKSISHRALMFGGLASGETRISGLLEGEDVLRTAEAMRAMGAQIDRRDGTWTIRGVGNGCLLEPEAPLDFGNAGTGSRLTMGLVGTYDMTTRFTGDASLSKRPMGRVLNPLREMGTQVLQAEPGDRLPITLRGPKHATPINYRVPMASAQVKSAVLLAGLNTPGVTTVIEPVMTRDHTEKMLSGFGAAIQIETDKEGARHISIQGQGTLKGQVIAVPGDPSSAAFPLVAALIVPGSDILIENVLMNPTRTGLILTLQEMGADIELLNRRSAGGEDVADLRVRSSALKGVTVPASRAPSMIDEYPILAVAASLAEGETVMLGLEELRVKESDRLSAVAEGLKVNGIDCTEGKDTLTVRGRPEGKGLGGATVTTHLDHRIAMAFLVLGLASERPVSVDDQSMIATSFPEFMDLMTGLGAEIEDRD</sequence>
<gene>
    <name evidence="1" type="primary">aroA</name>
    <name type="ordered locus">Meso_3609</name>
</gene>
<evidence type="ECO:0000255" key="1">
    <source>
        <dbReference type="HAMAP-Rule" id="MF_00210"/>
    </source>
</evidence>
<evidence type="ECO:0000256" key="2">
    <source>
        <dbReference type="SAM" id="MobiDB-lite"/>
    </source>
</evidence>
<accession>Q11C97</accession>
<dbReference type="EC" id="2.5.1.19" evidence="1"/>
<dbReference type="EMBL" id="CP000390">
    <property type="protein sequence ID" value="ABG64978.1"/>
    <property type="molecule type" value="Genomic_DNA"/>
</dbReference>
<dbReference type="SMR" id="Q11C97"/>
<dbReference type="STRING" id="266779.Meso_3609"/>
<dbReference type="KEGG" id="mes:Meso_3609"/>
<dbReference type="eggNOG" id="COG0128">
    <property type="taxonomic scope" value="Bacteria"/>
</dbReference>
<dbReference type="HOGENOM" id="CLU_024321_0_1_5"/>
<dbReference type="OrthoDB" id="9809920at2"/>
<dbReference type="UniPathway" id="UPA00053">
    <property type="reaction ID" value="UER00089"/>
</dbReference>
<dbReference type="GO" id="GO:0005737">
    <property type="term" value="C:cytoplasm"/>
    <property type="evidence" value="ECO:0007669"/>
    <property type="project" value="UniProtKB-SubCell"/>
</dbReference>
<dbReference type="GO" id="GO:0003866">
    <property type="term" value="F:3-phosphoshikimate 1-carboxyvinyltransferase activity"/>
    <property type="evidence" value="ECO:0007669"/>
    <property type="project" value="UniProtKB-UniRule"/>
</dbReference>
<dbReference type="GO" id="GO:0008652">
    <property type="term" value="P:amino acid biosynthetic process"/>
    <property type="evidence" value="ECO:0007669"/>
    <property type="project" value="UniProtKB-KW"/>
</dbReference>
<dbReference type="GO" id="GO:0009073">
    <property type="term" value="P:aromatic amino acid family biosynthetic process"/>
    <property type="evidence" value="ECO:0007669"/>
    <property type="project" value="UniProtKB-KW"/>
</dbReference>
<dbReference type="GO" id="GO:0009423">
    <property type="term" value="P:chorismate biosynthetic process"/>
    <property type="evidence" value="ECO:0007669"/>
    <property type="project" value="UniProtKB-UniRule"/>
</dbReference>
<dbReference type="CDD" id="cd01556">
    <property type="entry name" value="EPSP_synthase"/>
    <property type="match status" value="1"/>
</dbReference>
<dbReference type="FunFam" id="3.65.10.10:FF:000006">
    <property type="entry name" value="3-phosphoshikimate 1-carboxyvinyltransferase"/>
    <property type="match status" value="1"/>
</dbReference>
<dbReference type="Gene3D" id="3.65.10.10">
    <property type="entry name" value="Enolpyruvate transferase domain"/>
    <property type="match status" value="2"/>
</dbReference>
<dbReference type="HAMAP" id="MF_00210">
    <property type="entry name" value="EPSP_synth"/>
    <property type="match status" value="1"/>
</dbReference>
<dbReference type="InterPro" id="IPR001986">
    <property type="entry name" value="Enolpyruvate_Tfrase_dom"/>
</dbReference>
<dbReference type="InterPro" id="IPR036968">
    <property type="entry name" value="Enolpyruvate_Tfrase_sf"/>
</dbReference>
<dbReference type="InterPro" id="IPR006264">
    <property type="entry name" value="EPSP_synthase"/>
</dbReference>
<dbReference type="InterPro" id="IPR023193">
    <property type="entry name" value="EPSP_synthase_CS"/>
</dbReference>
<dbReference type="InterPro" id="IPR013792">
    <property type="entry name" value="RNA3'P_cycl/enolpyr_Trfase_a/b"/>
</dbReference>
<dbReference type="NCBIfam" id="TIGR01356">
    <property type="entry name" value="aroA"/>
    <property type="match status" value="1"/>
</dbReference>
<dbReference type="PANTHER" id="PTHR21090">
    <property type="entry name" value="AROM/DEHYDROQUINATE SYNTHASE"/>
    <property type="match status" value="1"/>
</dbReference>
<dbReference type="PANTHER" id="PTHR21090:SF5">
    <property type="entry name" value="PENTAFUNCTIONAL AROM POLYPEPTIDE"/>
    <property type="match status" value="1"/>
</dbReference>
<dbReference type="Pfam" id="PF00275">
    <property type="entry name" value="EPSP_synthase"/>
    <property type="match status" value="1"/>
</dbReference>
<dbReference type="PIRSF" id="PIRSF000505">
    <property type="entry name" value="EPSPS"/>
    <property type="match status" value="1"/>
</dbReference>
<dbReference type="SUPFAM" id="SSF55205">
    <property type="entry name" value="EPT/RTPC-like"/>
    <property type="match status" value="1"/>
</dbReference>
<dbReference type="PROSITE" id="PS00104">
    <property type="entry name" value="EPSP_SYNTHASE_1"/>
    <property type="match status" value="1"/>
</dbReference>
<dbReference type="PROSITE" id="PS00885">
    <property type="entry name" value="EPSP_SYNTHASE_2"/>
    <property type="match status" value="1"/>
</dbReference>
<name>AROA_CHESB</name>
<comment type="function">
    <text evidence="1">Catalyzes the transfer of the enolpyruvyl moiety of phosphoenolpyruvate (PEP) to the 5-hydroxyl of shikimate-3-phosphate (S3P) to produce enolpyruvyl shikimate-3-phosphate and inorganic phosphate.</text>
</comment>
<comment type="catalytic activity">
    <reaction evidence="1">
        <text>3-phosphoshikimate + phosphoenolpyruvate = 5-O-(1-carboxyvinyl)-3-phosphoshikimate + phosphate</text>
        <dbReference type="Rhea" id="RHEA:21256"/>
        <dbReference type="ChEBI" id="CHEBI:43474"/>
        <dbReference type="ChEBI" id="CHEBI:57701"/>
        <dbReference type="ChEBI" id="CHEBI:58702"/>
        <dbReference type="ChEBI" id="CHEBI:145989"/>
        <dbReference type="EC" id="2.5.1.19"/>
    </reaction>
    <physiologicalReaction direction="left-to-right" evidence="1">
        <dbReference type="Rhea" id="RHEA:21257"/>
    </physiologicalReaction>
</comment>
<comment type="pathway">
    <text evidence="1">Metabolic intermediate biosynthesis; chorismate biosynthesis; chorismate from D-erythrose 4-phosphate and phosphoenolpyruvate: step 6/7.</text>
</comment>
<comment type="subunit">
    <text evidence="1">Monomer.</text>
</comment>
<comment type="subcellular location">
    <subcellularLocation>
        <location evidence="1">Cytoplasm</location>
    </subcellularLocation>
</comment>
<comment type="similarity">
    <text evidence="1">Belongs to the EPSP synthase family.</text>
</comment>
<proteinExistence type="inferred from homology"/>
<reference key="1">
    <citation type="submission" date="2006-06" db="EMBL/GenBank/DDBJ databases">
        <title>Complete sequence of chromosome of Mesorhizobium sp. BNC1.</title>
        <authorList>
            <consortium name="US DOE Joint Genome Institute"/>
            <person name="Copeland A."/>
            <person name="Lucas S."/>
            <person name="Lapidus A."/>
            <person name="Barry K."/>
            <person name="Detter J.C."/>
            <person name="Glavina del Rio T."/>
            <person name="Hammon N."/>
            <person name="Israni S."/>
            <person name="Dalin E."/>
            <person name="Tice H."/>
            <person name="Pitluck S."/>
            <person name="Chertkov O."/>
            <person name="Brettin T."/>
            <person name="Bruce D."/>
            <person name="Han C."/>
            <person name="Tapia R."/>
            <person name="Gilna P."/>
            <person name="Schmutz J."/>
            <person name="Larimer F."/>
            <person name="Land M."/>
            <person name="Hauser L."/>
            <person name="Kyrpides N."/>
            <person name="Mikhailova N."/>
            <person name="Richardson P."/>
        </authorList>
    </citation>
    <scope>NUCLEOTIDE SEQUENCE [LARGE SCALE GENOMIC DNA]</scope>
    <source>
        <strain>BNC1</strain>
    </source>
</reference>
<feature type="chain" id="PRO_1000012449" description="3-phosphoshikimate 1-carboxyvinyltransferase">
    <location>
        <begin position="1"/>
        <end position="449"/>
    </location>
</feature>
<feature type="region of interest" description="Disordered" evidence="2">
    <location>
        <begin position="1"/>
        <end position="26"/>
    </location>
</feature>
<feature type="active site" description="Proton acceptor" evidence="1">
    <location>
        <position position="327"/>
    </location>
</feature>
<feature type="binding site" evidence="1">
    <location>
        <position position="28"/>
    </location>
    <ligand>
        <name>3-phosphoshikimate</name>
        <dbReference type="ChEBI" id="CHEBI:145989"/>
    </ligand>
</feature>
<feature type="binding site" evidence="1">
    <location>
        <position position="28"/>
    </location>
    <ligand>
        <name>phosphoenolpyruvate</name>
        <dbReference type="ChEBI" id="CHEBI:58702"/>
    </ligand>
</feature>
<feature type="binding site" evidence="1">
    <location>
        <position position="29"/>
    </location>
    <ligand>
        <name>3-phosphoshikimate</name>
        <dbReference type="ChEBI" id="CHEBI:145989"/>
    </ligand>
</feature>
<feature type="binding site" evidence="1">
    <location>
        <position position="33"/>
    </location>
    <ligand>
        <name>3-phosphoshikimate</name>
        <dbReference type="ChEBI" id="CHEBI:145989"/>
    </ligand>
</feature>
<feature type="binding site" evidence="1">
    <location>
        <position position="100"/>
    </location>
    <ligand>
        <name>phosphoenolpyruvate</name>
        <dbReference type="ChEBI" id="CHEBI:58702"/>
    </ligand>
</feature>
<feature type="binding site" evidence="1">
    <location>
        <position position="128"/>
    </location>
    <ligand>
        <name>phosphoenolpyruvate</name>
        <dbReference type="ChEBI" id="CHEBI:58702"/>
    </ligand>
</feature>
<feature type="binding site" evidence="1">
    <location>
        <position position="174"/>
    </location>
    <ligand>
        <name>3-phosphoshikimate</name>
        <dbReference type="ChEBI" id="CHEBI:145989"/>
    </ligand>
</feature>
<feature type="binding site" evidence="1">
    <location>
        <position position="176"/>
    </location>
    <ligand>
        <name>3-phosphoshikimate</name>
        <dbReference type="ChEBI" id="CHEBI:145989"/>
    </ligand>
</feature>
<feature type="binding site" evidence="1">
    <location>
        <position position="176"/>
    </location>
    <ligand>
        <name>phosphoenolpyruvate</name>
        <dbReference type="ChEBI" id="CHEBI:58702"/>
    </ligand>
</feature>
<feature type="binding site" evidence="1">
    <location>
        <position position="327"/>
    </location>
    <ligand>
        <name>3-phosphoshikimate</name>
        <dbReference type="ChEBI" id="CHEBI:145989"/>
    </ligand>
</feature>
<feature type="binding site" evidence="1">
    <location>
        <position position="354"/>
    </location>
    <ligand>
        <name>3-phosphoshikimate</name>
        <dbReference type="ChEBI" id="CHEBI:145989"/>
    </ligand>
</feature>
<feature type="binding site" evidence="1">
    <location>
        <position position="358"/>
    </location>
    <ligand>
        <name>phosphoenolpyruvate</name>
        <dbReference type="ChEBI" id="CHEBI:58702"/>
    </ligand>
</feature>
<feature type="binding site" evidence="1">
    <location>
        <position position="403"/>
    </location>
    <ligand>
        <name>phosphoenolpyruvate</name>
        <dbReference type="ChEBI" id="CHEBI:58702"/>
    </ligand>
</feature>
<keyword id="KW-0028">Amino-acid biosynthesis</keyword>
<keyword id="KW-0057">Aromatic amino acid biosynthesis</keyword>
<keyword id="KW-0963">Cytoplasm</keyword>
<keyword id="KW-0808">Transferase</keyword>
<organism>
    <name type="scientific">Chelativorans sp. (strain BNC1)</name>
    <dbReference type="NCBI Taxonomy" id="266779"/>
    <lineage>
        <taxon>Bacteria</taxon>
        <taxon>Pseudomonadati</taxon>
        <taxon>Pseudomonadota</taxon>
        <taxon>Alphaproteobacteria</taxon>
        <taxon>Hyphomicrobiales</taxon>
        <taxon>Phyllobacteriaceae</taxon>
        <taxon>Chelativorans</taxon>
    </lineage>
</organism>